<evidence type="ECO:0000269" key="1">
    <source>
    </source>
</evidence>
<evidence type="ECO:0000303" key="2">
    <source>
    </source>
</evidence>
<evidence type="ECO:0000305" key="3"/>
<evidence type="ECO:0000312" key="4">
    <source>
        <dbReference type="EMBL" id="CCP44555.1"/>
    </source>
</evidence>
<protein>
    <recommendedName>
        <fullName evidence="3">PPE family protein PPE26</fullName>
    </recommendedName>
</protein>
<gene>
    <name evidence="2 4" type="primary">PPE26</name>
    <name evidence="4" type="ordered locus">Rv1789</name>
</gene>
<sequence length="393" mass="38589">MDFGALPPEVNSVRMYAGPGSAPMVAAASAWNGLAAELSSAATGYETVITQLSSEGWLGPASAAMAEAVAPYVAWMSAAAAQAEQAATQARAAAAAFEAAFAATVPPPLIAANRASLMQLISTNVFGQNTSAIAAAEAQYGEMWAQDSAAMYAYAGSSASASAVTPFSTPPQIANPTAQGTQAAAVATAAGTAQSTLTEMITGLPNALQSLTSPLLQSSNGPLSWLWQILFGTPNFPTSISALLTDLQPYASFFYNTEGLPYFSIGMGNNFIQSAKTLGLIGSAAPAAVAAAGDAAKGLPGLGGMLGGGPVAAGLGNAASVGKLSVPPVWSGPLPGSVTPGAAPLPVSTVSAAPEAAPGSLLGGLPLAGAGGAGAGPRYGFRPTVMARPPFAG</sequence>
<comment type="function">
    <text evidence="1">Probably plays a key role in regulating innate and adaptive immune responses through human Toll-like receptor 2 (TLR2). Interacts with TLR2, leading to the subsequent activation of the mitogen-activated protein kinase (MAPK) and nuclear factor kappa B (NF-kappa-B) signaling pathways. Stimulates macrophage activation by augmenting pro-inflammatory cytokine production (TNF-alpha, IL-6 and IL-12p40) and the expression of cell surface molecules (CD80, CD86, MHC class I and II). Also participates in adaptive immunity by directing Th1-polarised immune responses.</text>
</comment>
<comment type="subunit">
    <text evidence="1">Interacts with human TLR2.</text>
</comment>
<comment type="biotechnology">
    <text evidence="1">Candidate for development of a vaccine for the control of tuberculosis.</text>
</comment>
<comment type="similarity">
    <text evidence="3">Belongs to the mycobacterial PPE family.</text>
</comment>
<organism>
    <name type="scientific">Mycobacterium tuberculosis (strain ATCC 25618 / H37Rv)</name>
    <dbReference type="NCBI Taxonomy" id="83332"/>
    <lineage>
        <taxon>Bacteria</taxon>
        <taxon>Bacillati</taxon>
        <taxon>Actinomycetota</taxon>
        <taxon>Actinomycetes</taxon>
        <taxon>Mycobacteriales</taxon>
        <taxon>Mycobacteriaceae</taxon>
        <taxon>Mycobacterium</taxon>
        <taxon>Mycobacterium tuberculosis complex</taxon>
    </lineage>
</organism>
<dbReference type="EMBL" id="AL123456">
    <property type="protein sequence ID" value="CCP44555.1"/>
    <property type="molecule type" value="Genomic_DNA"/>
</dbReference>
<dbReference type="RefSeq" id="WP_003408979.1">
    <property type="nucleotide sequence ID" value="NZ_NVQJ01000037.1"/>
</dbReference>
<dbReference type="RefSeq" id="YP_177835.1">
    <property type="nucleotide sequence ID" value="NC_000962.3"/>
</dbReference>
<dbReference type="SMR" id="Q79FK6"/>
<dbReference type="STRING" id="83332.Rv1789"/>
<dbReference type="PaxDb" id="83332-Rv1789"/>
<dbReference type="DNASU" id="885333"/>
<dbReference type="GeneID" id="885333"/>
<dbReference type="KEGG" id="mtu:Rv1789"/>
<dbReference type="KEGG" id="mtv:RVBD_1789"/>
<dbReference type="PATRIC" id="fig|83332.111.peg.1993"/>
<dbReference type="TubercuList" id="Rv1789"/>
<dbReference type="eggNOG" id="COG5651">
    <property type="taxonomic scope" value="Bacteria"/>
</dbReference>
<dbReference type="HOGENOM" id="CLU_000243_0_1_11"/>
<dbReference type="InParanoid" id="Q79FK6"/>
<dbReference type="OrthoDB" id="4727494at2"/>
<dbReference type="PhylomeDB" id="Q79FK6"/>
<dbReference type="PHI-base" id="PHI:6423"/>
<dbReference type="Proteomes" id="UP000001584">
    <property type="component" value="Chromosome"/>
</dbReference>
<dbReference type="GO" id="GO:0052572">
    <property type="term" value="P:response to host immune response"/>
    <property type="evidence" value="ECO:0000318"/>
    <property type="project" value="GO_Central"/>
</dbReference>
<dbReference type="FunFam" id="1.20.1260.20:FF:000001">
    <property type="entry name" value="PPE family protein PPE41"/>
    <property type="match status" value="1"/>
</dbReference>
<dbReference type="Gene3D" id="1.20.1260.20">
    <property type="entry name" value="PPE superfamily"/>
    <property type="match status" value="1"/>
</dbReference>
<dbReference type="InterPro" id="IPR022171">
    <property type="entry name" value="PPE_C"/>
</dbReference>
<dbReference type="InterPro" id="IPR000030">
    <property type="entry name" value="PPE_dom"/>
</dbReference>
<dbReference type="InterPro" id="IPR038332">
    <property type="entry name" value="PPE_sf"/>
</dbReference>
<dbReference type="PANTHER" id="PTHR46766">
    <property type="entry name" value="GLUTAMINE-RICH PROTEIN 2"/>
    <property type="match status" value="1"/>
</dbReference>
<dbReference type="PANTHER" id="PTHR46766:SF1">
    <property type="entry name" value="GLUTAMINE-RICH PROTEIN 2"/>
    <property type="match status" value="1"/>
</dbReference>
<dbReference type="Pfam" id="PF00823">
    <property type="entry name" value="PPE"/>
    <property type="match status" value="1"/>
</dbReference>
<dbReference type="Pfam" id="PF12484">
    <property type="entry name" value="PPE-SVP"/>
    <property type="match status" value="1"/>
</dbReference>
<dbReference type="SUPFAM" id="SSF140459">
    <property type="entry name" value="PE/PPE dimer-like"/>
    <property type="match status" value="1"/>
</dbReference>
<proteinExistence type="evidence at protein level"/>
<reference key="1">
    <citation type="journal article" date="1998" name="Nature">
        <title>Deciphering the biology of Mycobacterium tuberculosis from the complete genome sequence.</title>
        <authorList>
            <person name="Cole S.T."/>
            <person name="Brosch R."/>
            <person name="Parkhill J."/>
            <person name="Garnier T."/>
            <person name="Churcher C.M."/>
            <person name="Harris D.E."/>
            <person name="Gordon S.V."/>
            <person name="Eiglmeier K."/>
            <person name="Gas S."/>
            <person name="Barry C.E. III"/>
            <person name="Tekaia F."/>
            <person name="Badcock K."/>
            <person name="Basham D."/>
            <person name="Brown D."/>
            <person name="Chillingworth T."/>
            <person name="Connor R."/>
            <person name="Davies R.M."/>
            <person name="Devlin K."/>
            <person name="Feltwell T."/>
            <person name="Gentles S."/>
            <person name="Hamlin N."/>
            <person name="Holroyd S."/>
            <person name="Hornsby T."/>
            <person name="Jagels K."/>
            <person name="Krogh A."/>
            <person name="McLean J."/>
            <person name="Moule S."/>
            <person name="Murphy L.D."/>
            <person name="Oliver S."/>
            <person name="Osborne J."/>
            <person name="Quail M.A."/>
            <person name="Rajandream M.A."/>
            <person name="Rogers J."/>
            <person name="Rutter S."/>
            <person name="Seeger K."/>
            <person name="Skelton S."/>
            <person name="Squares S."/>
            <person name="Squares R."/>
            <person name="Sulston J.E."/>
            <person name="Taylor K."/>
            <person name="Whitehead S."/>
            <person name="Barrell B.G."/>
        </authorList>
    </citation>
    <scope>NUCLEOTIDE SEQUENCE [LARGE SCALE GENOMIC DNA]</scope>
    <source>
        <strain>ATCC 25618 / H37Rv</strain>
    </source>
</reference>
<reference key="2">
    <citation type="journal article" date="2011" name="Mol. Cell. Proteomics">
        <title>Proteogenomic analysis of Mycobacterium tuberculosis by high resolution mass spectrometry.</title>
        <authorList>
            <person name="Kelkar D.S."/>
            <person name="Kumar D."/>
            <person name="Kumar P."/>
            <person name="Balakrishnan L."/>
            <person name="Muthusamy B."/>
            <person name="Yadav A.K."/>
            <person name="Shrivastava P."/>
            <person name="Marimuthu A."/>
            <person name="Anand S."/>
            <person name="Sundaram H."/>
            <person name="Kingsbury R."/>
            <person name="Harsha H.C."/>
            <person name="Nair B."/>
            <person name="Prasad T.S."/>
            <person name="Chauhan D.S."/>
            <person name="Katoch K."/>
            <person name="Katoch V.M."/>
            <person name="Kumar P."/>
            <person name="Chaerkady R."/>
            <person name="Ramachandran S."/>
            <person name="Dash D."/>
            <person name="Pandey A."/>
        </authorList>
    </citation>
    <scope>IDENTIFICATION BY MASS SPECTROMETRY [LARGE SCALE ANALYSIS]</scope>
    <source>
        <strain>ATCC 25618 / H37Rv</strain>
    </source>
</reference>
<reference key="3">
    <citation type="journal article" date="2015" name="Oncotarget">
        <title>PPE26 induces TLR2-dependent activation of macrophages and drives Th1-type T-cell immunity by triggering the cross-talk of multiple pathways involved in the host response.</title>
        <authorList>
            <person name="Su H."/>
            <person name="Kong C."/>
            <person name="Zhu L."/>
            <person name="Huang Q."/>
            <person name="Luo L."/>
            <person name="Wang H."/>
            <person name="Xu Y."/>
        </authorList>
    </citation>
    <scope>FUNCTION</scope>
    <scope>INTERACTION WITH TLR2</scope>
    <scope>BIOTECHNOLOGY</scope>
</reference>
<keyword id="KW-1185">Reference proteome</keyword>
<keyword id="KW-0843">Virulence</keyword>
<accession>Q79FK6</accession>
<accession>F2GIX6</accession>
<accession>I6Y7H5</accession>
<accession>L0T997</accession>
<feature type="chain" id="PRO_0000437938" description="PPE family protein PPE26">
    <location>
        <begin position="1"/>
        <end position="393"/>
    </location>
</feature>
<name>PPE26_MYCTU</name>